<proteinExistence type="inferred from homology"/>
<sequence length="620" mass="65938">MTTEYDVIVIGGGHAGCEAAAAAARCGARTLLLTHRRDTIGAMSCNPAIGGIGKGHLVREIDALDGLMARAADRAGIHFKLLNRSKGPAVHGPRAQADRSLYRRAIQDLLAETANLDIAEGAAGDLIVDDAGQAAGVVCEDGRQFRAGAVVLTAGTFLRGVIHIGHDSHPAGRVGEPPAHALGERLQALGLPMGRLKTGTPARLDRTSIDWDSLAEDRGDAVPEPFSRLTQAIDNPQLSCRITATTPRTHALIREHLHLSAVYGGAIAGRGPRYCPSIEDKVVRFAERDSHQIFLEPEALPGNAGGDLVYPNGISTSLPADIQEQLIHSIPGLERCRIVRPGYAVEYDYVDPRALAPTLELTALPRLFLAGQINGTTGYEEAGAQGLLAGLNAARRAGGGEGIAIDRGAAYLGVMIDDLATQGVSEPYRMFTSRAEYRLSLRADNADLRLTGQGIGWGCVGSARAHLFTAERDAIDTAMQRAGAESFLPDALQQAGITVSADGRRRTLLDVLATAATPDAIARIAPWFAALPSRVSRHVETEARYSGYLVRQAREIRQLEAETRITLPADLDYRRIGGLSSEMQERLAAARPASFSAAQRVPGITPSALMALLSHVRQVA</sequence>
<comment type="function">
    <text evidence="1">NAD-binding protein involved in the addition of a carboxymethylaminomethyl (cmnm) group at the wobble position (U34) of certain tRNAs, forming tRNA-cmnm(5)s(2)U34.</text>
</comment>
<comment type="cofactor">
    <cofactor evidence="1">
        <name>FAD</name>
        <dbReference type="ChEBI" id="CHEBI:57692"/>
    </cofactor>
</comment>
<comment type="subunit">
    <text evidence="1">Homodimer. Heterotetramer of two MnmE and two MnmG subunits.</text>
</comment>
<comment type="subcellular location">
    <subcellularLocation>
        <location evidence="1">Cytoplasm</location>
    </subcellularLocation>
</comment>
<comment type="similarity">
    <text evidence="1">Belongs to the MnmG family.</text>
</comment>
<name>MNMG_GLUDA</name>
<dbReference type="EMBL" id="AM889285">
    <property type="protein sequence ID" value="CAP55171.1"/>
    <property type="molecule type" value="Genomic_DNA"/>
</dbReference>
<dbReference type="EMBL" id="CP001189">
    <property type="protein sequence ID" value="ACI51699.1"/>
    <property type="molecule type" value="Genomic_DNA"/>
</dbReference>
<dbReference type="RefSeq" id="WP_012224369.1">
    <property type="nucleotide sequence ID" value="NC_010125.1"/>
</dbReference>
<dbReference type="RefSeq" id="WP_012554049.1">
    <property type="nucleotide sequence ID" value="NC_011365.1"/>
</dbReference>
<dbReference type="SMR" id="A9HE13"/>
<dbReference type="STRING" id="272568.GDI1228"/>
<dbReference type="KEGG" id="gdi:GDI1228"/>
<dbReference type="KEGG" id="gdj:Gdia_1939"/>
<dbReference type="eggNOG" id="COG0445">
    <property type="taxonomic scope" value="Bacteria"/>
</dbReference>
<dbReference type="HOGENOM" id="CLU_007831_2_2_5"/>
<dbReference type="OrthoDB" id="9815560at2"/>
<dbReference type="Proteomes" id="UP000001176">
    <property type="component" value="Chromosome"/>
</dbReference>
<dbReference type="GO" id="GO:0005829">
    <property type="term" value="C:cytosol"/>
    <property type="evidence" value="ECO:0007669"/>
    <property type="project" value="TreeGrafter"/>
</dbReference>
<dbReference type="GO" id="GO:0050660">
    <property type="term" value="F:flavin adenine dinucleotide binding"/>
    <property type="evidence" value="ECO:0007669"/>
    <property type="project" value="UniProtKB-UniRule"/>
</dbReference>
<dbReference type="GO" id="GO:0030488">
    <property type="term" value="P:tRNA methylation"/>
    <property type="evidence" value="ECO:0007669"/>
    <property type="project" value="TreeGrafter"/>
</dbReference>
<dbReference type="GO" id="GO:0002098">
    <property type="term" value="P:tRNA wobble uridine modification"/>
    <property type="evidence" value="ECO:0007669"/>
    <property type="project" value="InterPro"/>
</dbReference>
<dbReference type="FunFam" id="3.50.50.60:FF:000082">
    <property type="entry name" value="protein MTO1 homolog, mitochondrial isoform X1"/>
    <property type="match status" value="1"/>
</dbReference>
<dbReference type="FunFam" id="1.10.150.570:FF:000001">
    <property type="entry name" value="tRNA uridine 5-carboxymethylaminomethyl modification enzyme MnmG"/>
    <property type="match status" value="1"/>
</dbReference>
<dbReference type="FunFam" id="3.50.50.60:FF:000002">
    <property type="entry name" value="tRNA uridine 5-carboxymethylaminomethyl modification enzyme MnmG"/>
    <property type="match status" value="1"/>
</dbReference>
<dbReference type="Gene3D" id="3.50.50.60">
    <property type="entry name" value="FAD/NAD(P)-binding domain"/>
    <property type="match status" value="2"/>
</dbReference>
<dbReference type="Gene3D" id="1.10.150.570">
    <property type="entry name" value="GidA associated domain, C-terminal subdomain"/>
    <property type="match status" value="1"/>
</dbReference>
<dbReference type="HAMAP" id="MF_00129">
    <property type="entry name" value="MnmG_GidA"/>
    <property type="match status" value="1"/>
</dbReference>
<dbReference type="InterPro" id="IPR036188">
    <property type="entry name" value="FAD/NAD-bd_sf"/>
</dbReference>
<dbReference type="InterPro" id="IPR049312">
    <property type="entry name" value="GIDA_C_N"/>
</dbReference>
<dbReference type="InterPro" id="IPR004416">
    <property type="entry name" value="MnmG"/>
</dbReference>
<dbReference type="InterPro" id="IPR002218">
    <property type="entry name" value="MnmG-rel"/>
</dbReference>
<dbReference type="InterPro" id="IPR020595">
    <property type="entry name" value="MnmG-rel_CS"/>
</dbReference>
<dbReference type="InterPro" id="IPR026904">
    <property type="entry name" value="MnmG_C"/>
</dbReference>
<dbReference type="InterPro" id="IPR047001">
    <property type="entry name" value="MnmG_C_subdom"/>
</dbReference>
<dbReference type="InterPro" id="IPR044920">
    <property type="entry name" value="MnmG_C_subdom_sf"/>
</dbReference>
<dbReference type="InterPro" id="IPR040131">
    <property type="entry name" value="MnmG_N"/>
</dbReference>
<dbReference type="NCBIfam" id="TIGR00136">
    <property type="entry name" value="mnmG_gidA"/>
    <property type="match status" value="1"/>
</dbReference>
<dbReference type="PANTHER" id="PTHR11806">
    <property type="entry name" value="GLUCOSE INHIBITED DIVISION PROTEIN A"/>
    <property type="match status" value="1"/>
</dbReference>
<dbReference type="PANTHER" id="PTHR11806:SF0">
    <property type="entry name" value="PROTEIN MTO1 HOMOLOG, MITOCHONDRIAL"/>
    <property type="match status" value="1"/>
</dbReference>
<dbReference type="Pfam" id="PF01134">
    <property type="entry name" value="GIDA"/>
    <property type="match status" value="1"/>
</dbReference>
<dbReference type="Pfam" id="PF21680">
    <property type="entry name" value="GIDA_C_1st"/>
    <property type="match status" value="1"/>
</dbReference>
<dbReference type="Pfam" id="PF13932">
    <property type="entry name" value="SAM_GIDA_C"/>
    <property type="match status" value="1"/>
</dbReference>
<dbReference type="SMART" id="SM01228">
    <property type="entry name" value="GIDA_assoc_3"/>
    <property type="match status" value="1"/>
</dbReference>
<dbReference type="SUPFAM" id="SSF51905">
    <property type="entry name" value="FAD/NAD(P)-binding domain"/>
    <property type="match status" value="1"/>
</dbReference>
<dbReference type="PROSITE" id="PS01280">
    <property type="entry name" value="GIDA_1"/>
    <property type="match status" value="1"/>
</dbReference>
<dbReference type="PROSITE" id="PS01281">
    <property type="entry name" value="GIDA_2"/>
    <property type="match status" value="1"/>
</dbReference>
<feature type="chain" id="PRO_0000345276" description="tRNA uridine 5-carboxymethylaminomethyl modification enzyme MnmG">
    <location>
        <begin position="1"/>
        <end position="620"/>
    </location>
</feature>
<feature type="binding site" evidence="1">
    <location>
        <begin position="11"/>
        <end position="16"/>
    </location>
    <ligand>
        <name>FAD</name>
        <dbReference type="ChEBI" id="CHEBI:57692"/>
    </ligand>
</feature>
<feature type="binding site" evidence="1">
    <location>
        <begin position="271"/>
        <end position="285"/>
    </location>
    <ligand>
        <name>NAD(+)</name>
        <dbReference type="ChEBI" id="CHEBI:57540"/>
    </ligand>
</feature>
<feature type="sequence conflict" description="In Ref. 2; ACI51699." evidence="2" ref="2">
    <original>A</original>
    <variation>T</variation>
    <location>
        <position position="420"/>
    </location>
</feature>
<gene>
    <name evidence="1" type="primary">mnmG</name>
    <name evidence="1" type="synonym">gidA</name>
    <name type="ordered locus">GDI1228</name>
    <name type="ordered locus">Gdia_1939</name>
</gene>
<keyword id="KW-0963">Cytoplasm</keyword>
<keyword id="KW-0274">FAD</keyword>
<keyword id="KW-0285">Flavoprotein</keyword>
<keyword id="KW-0520">NAD</keyword>
<keyword id="KW-1185">Reference proteome</keyword>
<keyword id="KW-0819">tRNA processing</keyword>
<reference key="1">
    <citation type="journal article" date="2009" name="BMC Genomics">
        <title>Complete genome sequence of the sugarcane nitrogen-fixing endophyte Gluconacetobacter diazotrophicus Pal5.</title>
        <authorList>
            <person name="Bertalan M."/>
            <person name="Albano R."/>
            <person name="de Padua V."/>
            <person name="Rouws L."/>
            <person name="Rojas C."/>
            <person name="Hemerly A."/>
            <person name="Teixeira K."/>
            <person name="Schwab S."/>
            <person name="Araujo J."/>
            <person name="Oliveira A."/>
            <person name="Franca L."/>
            <person name="Magalhaes V."/>
            <person name="Alqueres S."/>
            <person name="Cardoso A."/>
            <person name="Almeida W."/>
            <person name="Loureiro M.M."/>
            <person name="Nogueira E."/>
            <person name="Cidade D."/>
            <person name="Oliveira D."/>
            <person name="Simao T."/>
            <person name="Macedo J."/>
            <person name="Valadao A."/>
            <person name="Dreschsel M."/>
            <person name="Freitas F."/>
            <person name="Vidal M."/>
            <person name="Guedes H."/>
            <person name="Rodrigues E."/>
            <person name="Meneses C."/>
            <person name="Brioso P."/>
            <person name="Pozzer L."/>
            <person name="Figueiredo D."/>
            <person name="Montano H."/>
            <person name="Junior J."/>
            <person name="de Souza Filho G."/>
            <person name="Martin Quintana Flores V."/>
            <person name="Ferreira B."/>
            <person name="Branco A."/>
            <person name="Gonzalez P."/>
            <person name="Guillobel H."/>
            <person name="Lemos M."/>
            <person name="Seibel L."/>
            <person name="Macedo J."/>
            <person name="Alves-Ferreira M."/>
            <person name="Sachetto-Martins G."/>
            <person name="Coelho A."/>
            <person name="Santos E."/>
            <person name="Amaral G."/>
            <person name="Neves A."/>
            <person name="Pacheco A.B."/>
            <person name="Carvalho D."/>
            <person name="Lery L."/>
            <person name="Bisch P."/>
            <person name="Rossle S.C."/>
            <person name="Urmenyi T."/>
            <person name="Rael Pereira A."/>
            <person name="Silva R."/>
            <person name="Rondinelli E."/>
            <person name="von Kruger W."/>
            <person name="Martins O."/>
            <person name="Baldani J.I."/>
            <person name="Ferreira P.C."/>
        </authorList>
    </citation>
    <scope>NUCLEOTIDE SEQUENCE [LARGE SCALE GENOMIC DNA]</scope>
    <source>
        <strain>ATCC 49037 / DSM 5601 / CCUG 37298 / CIP 103539 / LMG 7603 / PAl5</strain>
    </source>
</reference>
<reference key="2">
    <citation type="journal article" date="2010" name="Stand. Genomic Sci.">
        <title>Two genome sequences of the same bacterial strain, Gluconacetobacter diazotrophicus PAl 5, suggest a new standard in genome sequence submission.</title>
        <authorList>
            <person name="Giongo A."/>
            <person name="Tyler H.L."/>
            <person name="Zipperer U.N."/>
            <person name="Triplett E.W."/>
        </authorList>
    </citation>
    <scope>NUCLEOTIDE SEQUENCE [LARGE SCALE GENOMIC DNA]</scope>
    <source>
        <strain>ATCC 49037 / DSM 5601 / CCUG 37298 / CIP 103539 / LMG 7603 / PAl5</strain>
    </source>
</reference>
<protein>
    <recommendedName>
        <fullName evidence="1">tRNA uridine 5-carboxymethylaminomethyl modification enzyme MnmG</fullName>
    </recommendedName>
    <alternativeName>
        <fullName evidence="1">Glucose-inhibited division protein A</fullName>
    </alternativeName>
</protein>
<accession>A9HE13</accession>
<accession>B5ZCP1</accession>
<evidence type="ECO:0000255" key="1">
    <source>
        <dbReference type="HAMAP-Rule" id="MF_00129"/>
    </source>
</evidence>
<evidence type="ECO:0000305" key="2"/>
<organism>
    <name type="scientific">Gluconacetobacter diazotrophicus (strain ATCC 49037 / DSM 5601 / CCUG 37298 / CIP 103539 / LMG 7603 / PAl5)</name>
    <dbReference type="NCBI Taxonomy" id="272568"/>
    <lineage>
        <taxon>Bacteria</taxon>
        <taxon>Pseudomonadati</taxon>
        <taxon>Pseudomonadota</taxon>
        <taxon>Alphaproteobacteria</taxon>
        <taxon>Acetobacterales</taxon>
        <taxon>Acetobacteraceae</taxon>
        <taxon>Gluconacetobacter</taxon>
    </lineage>
</organism>